<sequence>MTQSTNFDDVYPVQWRDDQVILIDQTRLPLEYKEVAIADYEAMGHAIKSMVVRGAPAIGVAAAYGMYLGARRIQTTELREFVVQLEFVADQLRQTRPTAVNLFWAIDQMLNVAYHSGENVEQIKANLLSQAQQIQLDDLRTCQAIGAAGLEVLPREPHQLTILTHCNAGALATAGYGTAIGVIRAAWSAGRLARVYADETRPRLQGAKLTVWECVQAGIPVTLITDNMAAHCMQQQRIDAVVVGADRIARNGDIANKIGTYGLAVLAKMHAIPFFVAAPLSTVDFALDDGSQIPIEERDPVEIYQPEGNRITPEGAEFYNPAFDVTPASLITAIITEQGAIAPEKLADLQA</sequence>
<evidence type="ECO:0000255" key="1">
    <source>
        <dbReference type="HAMAP-Rule" id="MF_01678"/>
    </source>
</evidence>
<evidence type="ECO:0000305" key="2"/>
<reference key="1">
    <citation type="journal article" date="1996" name="DNA Res.">
        <title>Sequence analysis of the genome of the unicellular cyanobacterium Synechocystis sp. strain PCC6803. II. Sequence determination of the entire genome and assignment of potential protein-coding regions.</title>
        <authorList>
            <person name="Kaneko T."/>
            <person name="Sato S."/>
            <person name="Kotani H."/>
            <person name="Tanaka A."/>
            <person name="Asamizu E."/>
            <person name="Nakamura Y."/>
            <person name="Miyajima N."/>
            <person name="Hirosawa M."/>
            <person name="Sugiura M."/>
            <person name="Sasamoto S."/>
            <person name="Kimura T."/>
            <person name="Hosouchi T."/>
            <person name="Matsuno A."/>
            <person name="Muraki A."/>
            <person name="Nakazaki N."/>
            <person name="Naruo K."/>
            <person name="Okumura S."/>
            <person name="Shimpo S."/>
            <person name="Takeuchi C."/>
            <person name="Wada T."/>
            <person name="Watanabe A."/>
            <person name="Yamada M."/>
            <person name="Yasuda M."/>
            <person name="Tabata S."/>
        </authorList>
    </citation>
    <scope>NUCLEOTIDE SEQUENCE [LARGE SCALE GENOMIC DNA]</scope>
    <source>
        <strain>ATCC 27184 / PCC 6803 / Kazusa</strain>
    </source>
</reference>
<dbReference type="EC" id="5.3.1.23" evidence="1"/>
<dbReference type="EMBL" id="BA000022">
    <property type="protein sequence ID" value="BAA18601.1"/>
    <property type="molecule type" value="Genomic_DNA"/>
</dbReference>
<dbReference type="PIR" id="S76472">
    <property type="entry name" value="S76472"/>
</dbReference>
<dbReference type="SMR" id="P74497"/>
<dbReference type="FunCoup" id="P74497">
    <property type="interactions" value="409"/>
</dbReference>
<dbReference type="IntAct" id="P74497">
    <property type="interactions" value="2"/>
</dbReference>
<dbReference type="STRING" id="1148.gene:10499484"/>
<dbReference type="PaxDb" id="1148-1653689"/>
<dbReference type="EnsemblBacteria" id="BAA18601">
    <property type="protein sequence ID" value="BAA18601"/>
    <property type="gene ID" value="BAA18601"/>
</dbReference>
<dbReference type="KEGG" id="syn:slr1938"/>
<dbReference type="eggNOG" id="COG0182">
    <property type="taxonomic scope" value="Bacteria"/>
</dbReference>
<dbReference type="InParanoid" id="P74497"/>
<dbReference type="PhylomeDB" id="P74497"/>
<dbReference type="UniPathway" id="UPA00904">
    <property type="reaction ID" value="UER00874"/>
</dbReference>
<dbReference type="Proteomes" id="UP000001425">
    <property type="component" value="Chromosome"/>
</dbReference>
<dbReference type="GO" id="GO:0046523">
    <property type="term" value="F:S-methyl-5-thioribose-1-phosphate isomerase activity"/>
    <property type="evidence" value="ECO:0000318"/>
    <property type="project" value="GO_Central"/>
</dbReference>
<dbReference type="GO" id="GO:0019509">
    <property type="term" value="P:L-methionine salvage from methylthioadenosine"/>
    <property type="evidence" value="ECO:0000318"/>
    <property type="project" value="GO_Central"/>
</dbReference>
<dbReference type="FunFam" id="3.40.50.10470:FF:000006">
    <property type="entry name" value="Methylthioribose-1-phosphate isomerase"/>
    <property type="match status" value="1"/>
</dbReference>
<dbReference type="FunFam" id="1.20.120.420:FF:000012">
    <property type="entry name" value="Putative methylthioribose-1-phosphate isomerase"/>
    <property type="match status" value="1"/>
</dbReference>
<dbReference type="Gene3D" id="1.20.120.420">
    <property type="entry name" value="translation initiation factor eif-2b, domain 1"/>
    <property type="match status" value="1"/>
</dbReference>
<dbReference type="Gene3D" id="3.40.50.10470">
    <property type="entry name" value="Translation initiation factor eif-2b, domain 2"/>
    <property type="match status" value="1"/>
</dbReference>
<dbReference type="HAMAP" id="MF_01678">
    <property type="entry name" value="Salvage_MtnA"/>
    <property type="match status" value="1"/>
</dbReference>
<dbReference type="InterPro" id="IPR000649">
    <property type="entry name" value="IF-2B-related"/>
</dbReference>
<dbReference type="InterPro" id="IPR005251">
    <property type="entry name" value="IF-M1Pi"/>
</dbReference>
<dbReference type="InterPro" id="IPR042529">
    <property type="entry name" value="IF_2B-like_C"/>
</dbReference>
<dbReference type="InterPro" id="IPR011559">
    <property type="entry name" value="Initiation_fac_2B_a/b/d"/>
</dbReference>
<dbReference type="InterPro" id="IPR027363">
    <property type="entry name" value="M1Pi_N"/>
</dbReference>
<dbReference type="InterPro" id="IPR037171">
    <property type="entry name" value="NagB/RpiA_transferase-like"/>
</dbReference>
<dbReference type="NCBIfam" id="TIGR00524">
    <property type="entry name" value="eIF-2B_rel"/>
    <property type="match status" value="1"/>
</dbReference>
<dbReference type="NCBIfam" id="NF004326">
    <property type="entry name" value="PRK05720.1"/>
    <property type="match status" value="1"/>
</dbReference>
<dbReference type="NCBIfam" id="TIGR00512">
    <property type="entry name" value="salvage_mtnA"/>
    <property type="match status" value="1"/>
</dbReference>
<dbReference type="PANTHER" id="PTHR43475">
    <property type="entry name" value="METHYLTHIORIBOSE-1-PHOSPHATE ISOMERASE"/>
    <property type="match status" value="1"/>
</dbReference>
<dbReference type="PANTHER" id="PTHR43475:SF1">
    <property type="entry name" value="METHYLTHIORIBOSE-1-PHOSPHATE ISOMERASE"/>
    <property type="match status" value="1"/>
</dbReference>
<dbReference type="Pfam" id="PF01008">
    <property type="entry name" value="IF-2B"/>
    <property type="match status" value="1"/>
</dbReference>
<dbReference type="SUPFAM" id="SSF100950">
    <property type="entry name" value="NagB/RpiA/CoA transferase-like"/>
    <property type="match status" value="1"/>
</dbReference>
<organism>
    <name type="scientific">Synechocystis sp. (strain ATCC 27184 / PCC 6803 / Kazusa)</name>
    <dbReference type="NCBI Taxonomy" id="1111708"/>
    <lineage>
        <taxon>Bacteria</taxon>
        <taxon>Bacillati</taxon>
        <taxon>Cyanobacteriota</taxon>
        <taxon>Cyanophyceae</taxon>
        <taxon>Synechococcales</taxon>
        <taxon>Merismopediaceae</taxon>
        <taxon>Synechocystis</taxon>
    </lineage>
</organism>
<protein>
    <recommendedName>
        <fullName evidence="1">Methylthioribose-1-phosphate isomerase</fullName>
        <shortName evidence="1">M1Pi</shortName>
        <shortName evidence="1">MTR-1-P isomerase</shortName>
        <ecNumber evidence="1">5.3.1.23</ecNumber>
    </recommendedName>
    <alternativeName>
        <fullName evidence="1">S-methyl-5-thioribose-1-phosphate isomerase</fullName>
    </alternativeName>
</protein>
<keyword id="KW-0028">Amino-acid biosynthesis</keyword>
<keyword id="KW-0413">Isomerase</keyword>
<keyword id="KW-0486">Methionine biosynthesis</keyword>
<keyword id="KW-1185">Reference proteome</keyword>
<gene>
    <name evidence="1" type="primary">mtnA</name>
    <name type="ordered locus">slr1938</name>
</gene>
<name>MTNA_SYNY3</name>
<feature type="chain" id="PRO_0000156093" description="Methylthioribose-1-phosphate isomerase">
    <location>
        <begin position="1"/>
        <end position="351"/>
    </location>
</feature>
<feature type="active site" description="Proton donor" evidence="1">
    <location>
        <position position="246"/>
    </location>
</feature>
<feature type="binding site" evidence="1">
    <location>
        <begin position="53"/>
        <end position="55"/>
    </location>
    <ligand>
        <name>substrate</name>
    </ligand>
</feature>
<feature type="binding site" evidence="1">
    <location>
        <position position="96"/>
    </location>
    <ligand>
        <name>substrate</name>
    </ligand>
</feature>
<feature type="binding site" evidence="1">
    <location>
        <position position="205"/>
    </location>
    <ligand>
        <name>substrate</name>
    </ligand>
</feature>
<feature type="binding site" evidence="1">
    <location>
        <begin position="256"/>
        <end position="257"/>
    </location>
    <ligand>
        <name>substrate</name>
    </ligand>
</feature>
<feature type="site" description="Transition state stabilizer" evidence="1">
    <location>
        <position position="166"/>
    </location>
</feature>
<comment type="function">
    <text evidence="1">Catalyzes the interconversion of methylthioribose-1-phosphate (MTR-1-P) into methylthioribulose-1-phosphate (MTRu-1-P).</text>
</comment>
<comment type="catalytic activity">
    <reaction evidence="1">
        <text>5-(methylsulfanyl)-alpha-D-ribose 1-phosphate = 5-(methylsulfanyl)-D-ribulose 1-phosphate</text>
        <dbReference type="Rhea" id="RHEA:19989"/>
        <dbReference type="ChEBI" id="CHEBI:58533"/>
        <dbReference type="ChEBI" id="CHEBI:58548"/>
        <dbReference type="EC" id="5.3.1.23"/>
    </reaction>
</comment>
<comment type="pathway">
    <text evidence="1">Amino-acid biosynthesis; L-methionine biosynthesis via salvage pathway; L-methionine from S-methyl-5-thio-alpha-D-ribose 1-phosphate: step 1/6.</text>
</comment>
<comment type="similarity">
    <text evidence="2">Belongs to the eIF-2B alpha/beta/delta subunits family. MtnA subfamily.</text>
</comment>
<accession>P74497</accession>
<proteinExistence type="inferred from homology"/>